<protein>
    <recommendedName>
        <fullName evidence="1">Phenylalanine--tRNA ligase alpha subunit</fullName>
        <ecNumber evidence="1">6.1.1.20</ecNumber>
    </recommendedName>
    <alternativeName>
        <fullName evidence="1">Phenylalanyl-tRNA synthetase alpha subunit</fullName>
        <shortName evidence="1">PheRS</shortName>
    </alternativeName>
</protein>
<comment type="catalytic activity">
    <reaction evidence="1">
        <text>tRNA(Phe) + L-phenylalanine + ATP = L-phenylalanyl-tRNA(Phe) + AMP + diphosphate + H(+)</text>
        <dbReference type="Rhea" id="RHEA:19413"/>
        <dbReference type="Rhea" id="RHEA-COMP:9668"/>
        <dbReference type="Rhea" id="RHEA-COMP:9699"/>
        <dbReference type="ChEBI" id="CHEBI:15378"/>
        <dbReference type="ChEBI" id="CHEBI:30616"/>
        <dbReference type="ChEBI" id="CHEBI:33019"/>
        <dbReference type="ChEBI" id="CHEBI:58095"/>
        <dbReference type="ChEBI" id="CHEBI:78442"/>
        <dbReference type="ChEBI" id="CHEBI:78531"/>
        <dbReference type="ChEBI" id="CHEBI:456215"/>
        <dbReference type="EC" id="6.1.1.20"/>
    </reaction>
</comment>
<comment type="cofactor">
    <cofactor evidence="1">
        <name>Mg(2+)</name>
        <dbReference type="ChEBI" id="CHEBI:18420"/>
    </cofactor>
    <text evidence="1">Binds 2 magnesium ions per tetramer.</text>
</comment>
<comment type="subunit">
    <text evidence="1">Tetramer of two alpha and two beta subunits.</text>
</comment>
<comment type="subcellular location">
    <subcellularLocation>
        <location evidence="1">Cytoplasm</location>
    </subcellularLocation>
</comment>
<comment type="similarity">
    <text evidence="1">Belongs to the class-II aminoacyl-tRNA synthetase family. Phe-tRNA synthetase alpha subunit type 1 subfamily.</text>
</comment>
<evidence type="ECO:0000255" key="1">
    <source>
        <dbReference type="HAMAP-Rule" id="MF_00281"/>
    </source>
</evidence>
<keyword id="KW-0030">Aminoacyl-tRNA synthetase</keyword>
<keyword id="KW-0067">ATP-binding</keyword>
<keyword id="KW-0963">Cytoplasm</keyword>
<keyword id="KW-0436">Ligase</keyword>
<keyword id="KW-0460">Magnesium</keyword>
<keyword id="KW-0479">Metal-binding</keyword>
<keyword id="KW-0547">Nucleotide-binding</keyword>
<keyword id="KW-0648">Protein biosynthesis</keyword>
<proteinExistence type="inferred from homology"/>
<sequence length="339" mass="38145">MKEKLKELQELALSKIEAVKTSSELEEIRVKFLGKKGELTTILRGMGNLSPEERPIVGKLVNEAKAAVEEKLESVLKAIKDKEKAEKLAGETIDISLPGRKKVIGKRHPLDLTLQSMEEIFVSMGFTIEDGPEVEYDHYNFEALNIPKDHPARSEQDTLYINDNIVLRTQTSPIQVRTMENQKPPIKMISPGKVYRSDSVDATHSPIFYQMEGLVIDKGVTFADLKGTLELFAKKMFGDKVQTKFRPHHFPFTEPSAEMDATCFVCGGEGCRVCKGSGWIELLGCGMVHPNVLRNCGLDPEVYSGFAFGFGVDRMVMLKYGIDDIRLLYESDMRFLNQF</sequence>
<dbReference type="EC" id="6.1.1.20" evidence="1"/>
<dbReference type="EMBL" id="CP000721">
    <property type="protein sequence ID" value="ABR33747.1"/>
    <property type="molecule type" value="Genomic_DNA"/>
</dbReference>
<dbReference type="RefSeq" id="WP_011968899.1">
    <property type="nucleotide sequence ID" value="NC_009617.1"/>
</dbReference>
<dbReference type="SMR" id="A6LTR7"/>
<dbReference type="GeneID" id="66344541"/>
<dbReference type="KEGG" id="cbe:Cbei_1573"/>
<dbReference type="eggNOG" id="COG0016">
    <property type="taxonomic scope" value="Bacteria"/>
</dbReference>
<dbReference type="HOGENOM" id="CLU_025086_0_1_9"/>
<dbReference type="Proteomes" id="UP000000565">
    <property type="component" value="Chromosome"/>
</dbReference>
<dbReference type="GO" id="GO:0005737">
    <property type="term" value="C:cytoplasm"/>
    <property type="evidence" value="ECO:0007669"/>
    <property type="project" value="UniProtKB-SubCell"/>
</dbReference>
<dbReference type="GO" id="GO:0005524">
    <property type="term" value="F:ATP binding"/>
    <property type="evidence" value="ECO:0007669"/>
    <property type="project" value="UniProtKB-UniRule"/>
</dbReference>
<dbReference type="GO" id="GO:0140096">
    <property type="term" value="F:catalytic activity, acting on a protein"/>
    <property type="evidence" value="ECO:0007669"/>
    <property type="project" value="UniProtKB-ARBA"/>
</dbReference>
<dbReference type="GO" id="GO:0000287">
    <property type="term" value="F:magnesium ion binding"/>
    <property type="evidence" value="ECO:0007669"/>
    <property type="project" value="UniProtKB-UniRule"/>
</dbReference>
<dbReference type="GO" id="GO:0004826">
    <property type="term" value="F:phenylalanine-tRNA ligase activity"/>
    <property type="evidence" value="ECO:0007669"/>
    <property type="project" value="UniProtKB-UniRule"/>
</dbReference>
<dbReference type="GO" id="GO:0016740">
    <property type="term" value="F:transferase activity"/>
    <property type="evidence" value="ECO:0007669"/>
    <property type="project" value="UniProtKB-ARBA"/>
</dbReference>
<dbReference type="GO" id="GO:0000049">
    <property type="term" value="F:tRNA binding"/>
    <property type="evidence" value="ECO:0007669"/>
    <property type="project" value="InterPro"/>
</dbReference>
<dbReference type="GO" id="GO:0006432">
    <property type="term" value="P:phenylalanyl-tRNA aminoacylation"/>
    <property type="evidence" value="ECO:0007669"/>
    <property type="project" value="UniProtKB-UniRule"/>
</dbReference>
<dbReference type="CDD" id="cd00496">
    <property type="entry name" value="PheRS_alpha_core"/>
    <property type="match status" value="1"/>
</dbReference>
<dbReference type="FunFam" id="3.30.930.10:FF:000003">
    <property type="entry name" value="Phenylalanine--tRNA ligase alpha subunit"/>
    <property type="match status" value="1"/>
</dbReference>
<dbReference type="Gene3D" id="3.30.930.10">
    <property type="entry name" value="Bira Bifunctional Protein, Domain 2"/>
    <property type="match status" value="1"/>
</dbReference>
<dbReference type="HAMAP" id="MF_00281">
    <property type="entry name" value="Phe_tRNA_synth_alpha1"/>
    <property type="match status" value="1"/>
</dbReference>
<dbReference type="InterPro" id="IPR006195">
    <property type="entry name" value="aa-tRNA-synth_II"/>
</dbReference>
<dbReference type="InterPro" id="IPR045864">
    <property type="entry name" value="aa-tRNA-synth_II/BPL/LPL"/>
</dbReference>
<dbReference type="InterPro" id="IPR004529">
    <property type="entry name" value="Phe-tRNA-synth_IIc_asu"/>
</dbReference>
<dbReference type="InterPro" id="IPR004188">
    <property type="entry name" value="Phe-tRNA_ligase_II_N"/>
</dbReference>
<dbReference type="InterPro" id="IPR022911">
    <property type="entry name" value="Phe_tRNA_ligase_alpha1_bac"/>
</dbReference>
<dbReference type="InterPro" id="IPR002319">
    <property type="entry name" value="Phenylalanyl-tRNA_Synthase"/>
</dbReference>
<dbReference type="InterPro" id="IPR010978">
    <property type="entry name" value="tRNA-bd_arm"/>
</dbReference>
<dbReference type="NCBIfam" id="TIGR00468">
    <property type="entry name" value="pheS"/>
    <property type="match status" value="1"/>
</dbReference>
<dbReference type="PANTHER" id="PTHR11538:SF41">
    <property type="entry name" value="PHENYLALANINE--TRNA LIGASE, MITOCHONDRIAL"/>
    <property type="match status" value="1"/>
</dbReference>
<dbReference type="PANTHER" id="PTHR11538">
    <property type="entry name" value="PHENYLALANYL-TRNA SYNTHETASE"/>
    <property type="match status" value="1"/>
</dbReference>
<dbReference type="Pfam" id="PF02912">
    <property type="entry name" value="Phe_tRNA-synt_N"/>
    <property type="match status" value="1"/>
</dbReference>
<dbReference type="Pfam" id="PF01409">
    <property type="entry name" value="tRNA-synt_2d"/>
    <property type="match status" value="1"/>
</dbReference>
<dbReference type="SUPFAM" id="SSF55681">
    <property type="entry name" value="Class II aaRS and biotin synthetases"/>
    <property type="match status" value="1"/>
</dbReference>
<dbReference type="SUPFAM" id="SSF46589">
    <property type="entry name" value="tRNA-binding arm"/>
    <property type="match status" value="1"/>
</dbReference>
<dbReference type="PROSITE" id="PS50862">
    <property type="entry name" value="AA_TRNA_LIGASE_II"/>
    <property type="match status" value="1"/>
</dbReference>
<name>SYFA_CLOB8</name>
<accession>A6LTR7</accession>
<gene>
    <name evidence="1" type="primary">pheS</name>
    <name type="ordered locus">Cbei_1573</name>
</gene>
<reference key="1">
    <citation type="submission" date="2007-06" db="EMBL/GenBank/DDBJ databases">
        <title>Complete sequence of Clostridium beijerinckii NCIMB 8052.</title>
        <authorList>
            <consortium name="US DOE Joint Genome Institute"/>
            <person name="Copeland A."/>
            <person name="Lucas S."/>
            <person name="Lapidus A."/>
            <person name="Barry K."/>
            <person name="Detter J.C."/>
            <person name="Glavina del Rio T."/>
            <person name="Hammon N."/>
            <person name="Israni S."/>
            <person name="Dalin E."/>
            <person name="Tice H."/>
            <person name="Pitluck S."/>
            <person name="Sims D."/>
            <person name="Brettin T."/>
            <person name="Bruce D."/>
            <person name="Tapia R."/>
            <person name="Brainard J."/>
            <person name="Schmutz J."/>
            <person name="Larimer F."/>
            <person name="Land M."/>
            <person name="Hauser L."/>
            <person name="Kyrpides N."/>
            <person name="Mikhailova N."/>
            <person name="Bennet G."/>
            <person name="Cann I."/>
            <person name="Chen J.-S."/>
            <person name="Contreras A.L."/>
            <person name="Jones D."/>
            <person name="Kashket E."/>
            <person name="Mitchell W."/>
            <person name="Stoddard S."/>
            <person name="Schwarz W."/>
            <person name="Qureshi N."/>
            <person name="Young M."/>
            <person name="Shi Z."/>
            <person name="Ezeji T."/>
            <person name="White B."/>
            <person name="Blaschek H."/>
            <person name="Richardson P."/>
        </authorList>
    </citation>
    <scope>NUCLEOTIDE SEQUENCE [LARGE SCALE GENOMIC DNA]</scope>
    <source>
        <strain>ATCC 51743 / NCIMB 8052</strain>
    </source>
</reference>
<feature type="chain" id="PRO_1000078830" description="Phenylalanine--tRNA ligase alpha subunit">
    <location>
        <begin position="1"/>
        <end position="339"/>
    </location>
</feature>
<feature type="binding site" evidence="1">
    <location>
        <position position="254"/>
    </location>
    <ligand>
        <name>Mg(2+)</name>
        <dbReference type="ChEBI" id="CHEBI:18420"/>
        <note>shared with beta subunit</note>
    </ligand>
</feature>
<organism>
    <name type="scientific">Clostridium beijerinckii (strain ATCC 51743 / NCIMB 8052)</name>
    <name type="common">Clostridium acetobutylicum</name>
    <dbReference type="NCBI Taxonomy" id="290402"/>
    <lineage>
        <taxon>Bacteria</taxon>
        <taxon>Bacillati</taxon>
        <taxon>Bacillota</taxon>
        <taxon>Clostridia</taxon>
        <taxon>Eubacteriales</taxon>
        <taxon>Clostridiaceae</taxon>
        <taxon>Clostridium</taxon>
    </lineage>
</organism>